<accession>B7HPT6</accession>
<name>RECR_BACC7</name>
<dbReference type="EMBL" id="CP001177">
    <property type="protein sequence ID" value="ACJ79957.1"/>
    <property type="molecule type" value="Genomic_DNA"/>
</dbReference>
<dbReference type="SMR" id="B7HPT6"/>
<dbReference type="KEGG" id="bcr:BCAH187_A0028"/>
<dbReference type="HOGENOM" id="CLU_060739_1_0_9"/>
<dbReference type="Proteomes" id="UP000002214">
    <property type="component" value="Chromosome"/>
</dbReference>
<dbReference type="GO" id="GO:0003677">
    <property type="term" value="F:DNA binding"/>
    <property type="evidence" value="ECO:0007669"/>
    <property type="project" value="UniProtKB-UniRule"/>
</dbReference>
<dbReference type="GO" id="GO:0008270">
    <property type="term" value="F:zinc ion binding"/>
    <property type="evidence" value="ECO:0007669"/>
    <property type="project" value="UniProtKB-KW"/>
</dbReference>
<dbReference type="GO" id="GO:0006310">
    <property type="term" value="P:DNA recombination"/>
    <property type="evidence" value="ECO:0007669"/>
    <property type="project" value="UniProtKB-UniRule"/>
</dbReference>
<dbReference type="GO" id="GO:0006281">
    <property type="term" value="P:DNA repair"/>
    <property type="evidence" value="ECO:0007669"/>
    <property type="project" value="UniProtKB-UniRule"/>
</dbReference>
<dbReference type="CDD" id="cd01025">
    <property type="entry name" value="TOPRIM_recR"/>
    <property type="match status" value="1"/>
</dbReference>
<dbReference type="Gene3D" id="3.30.60.80">
    <property type="match status" value="1"/>
</dbReference>
<dbReference type="Gene3D" id="3.40.1360.10">
    <property type="match status" value="1"/>
</dbReference>
<dbReference type="Gene3D" id="6.10.250.240">
    <property type="match status" value="1"/>
</dbReference>
<dbReference type="Gene3D" id="1.10.8.420">
    <property type="entry name" value="RecR Domain 1"/>
    <property type="match status" value="1"/>
</dbReference>
<dbReference type="HAMAP" id="MF_00017">
    <property type="entry name" value="RecR"/>
    <property type="match status" value="1"/>
</dbReference>
<dbReference type="InterPro" id="IPR000093">
    <property type="entry name" value="DNA_Rcmb_RecR"/>
</dbReference>
<dbReference type="InterPro" id="IPR023627">
    <property type="entry name" value="Rcmb_RecR"/>
</dbReference>
<dbReference type="InterPro" id="IPR015967">
    <property type="entry name" value="Rcmb_RecR_Znf"/>
</dbReference>
<dbReference type="InterPro" id="IPR006171">
    <property type="entry name" value="TOPRIM_dom"/>
</dbReference>
<dbReference type="InterPro" id="IPR034137">
    <property type="entry name" value="TOPRIM_RecR"/>
</dbReference>
<dbReference type="NCBIfam" id="TIGR00615">
    <property type="entry name" value="recR"/>
    <property type="match status" value="1"/>
</dbReference>
<dbReference type="PANTHER" id="PTHR30446">
    <property type="entry name" value="RECOMBINATION PROTEIN RECR"/>
    <property type="match status" value="1"/>
</dbReference>
<dbReference type="PANTHER" id="PTHR30446:SF0">
    <property type="entry name" value="RECOMBINATION PROTEIN RECR"/>
    <property type="match status" value="1"/>
</dbReference>
<dbReference type="Pfam" id="PF21175">
    <property type="entry name" value="RecR_C"/>
    <property type="match status" value="1"/>
</dbReference>
<dbReference type="Pfam" id="PF21176">
    <property type="entry name" value="RecR_HhH"/>
    <property type="match status" value="1"/>
</dbReference>
<dbReference type="Pfam" id="PF02132">
    <property type="entry name" value="RecR_ZnF"/>
    <property type="match status" value="1"/>
</dbReference>
<dbReference type="Pfam" id="PF13662">
    <property type="entry name" value="Toprim_4"/>
    <property type="match status" value="1"/>
</dbReference>
<dbReference type="SMART" id="SM00493">
    <property type="entry name" value="TOPRIM"/>
    <property type="match status" value="1"/>
</dbReference>
<dbReference type="SUPFAM" id="SSF111304">
    <property type="entry name" value="Recombination protein RecR"/>
    <property type="match status" value="1"/>
</dbReference>
<dbReference type="PROSITE" id="PS01300">
    <property type="entry name" value="RECR"/>
    <property type="match status" value="1"/>
</dbReference>
<dbReference type="PROSITE" id="PS50880">
    <property type="entry name" value="TOPRIM"/>
    <property type="match status" value="1"/>
</dbReference>
<protein>
    <recommendedName>
        <fullName evidence="1">Recombination protein RecR</fullName>
    </recommendedName>
</protein>
<feature type="chain" id="PRO_1000195360" description="Recombination protein RecR">
    <location>
        <begin position="1"/>
        <end position="198"/>
    </location>
</feature>
<feature type="domain" description="Toprim" evidence="1">
    <location>
        <begin position="80"/>
        <end position="175"/>
    </location>
</feature>
<feature type="zinc finger region" description="C4-type" evidence="1">
    <location>
        <begin position="57"/>
        <end position="72"/>
    </location>
</feature>
<sequence>MHYPEPISKLIDSFMKLPGIGPKTAVRLAFFVLDMKEDDVLGFAKALVNAKRDLAYCSVCGHITDRDPCYICNDSHRDQSVVCVVQEPKDVIAMEKMKEYQGVYHVLRGAISPMEGIGPEDINIPQLLKRLHDETVQEVILATNPNIEGEATAMYISRLLKPTGIKVTRIAHGLPVGGDLEYADEVTLSKALEGRREV</sequence>
<organism>
    <name type="scientific">Bacillus cereus (strain AH187)</name>
    <dbReference type="NCBI Taxonomy" id="405534"/>
    <lineage>
        <taxon>Bacteria</taxon>
        <taxon>Bacillati</taxon>
        <taxon>Bacillota</taxon>
        <taxon>Bacilli</taxon>
        <taxon>Bacillales</taxon>
        <taxon>Bacillaceae</taxon>
        <taxon>Bacillus</taxon>
        <taxon>Bacillus cereus group</taxon>
    </lineage>
</organism>
<reference key="1">
    <citation type="submission" date="2008-10" db="EMBL/GenBank/DDBJ databases">
        <title>Genome sequence of Bacillus cereus AH187.</title>
        <authorList>
            <person name="Dodson R.J."/>
            <person name="Durkin A.S."/>
            <person name="Rosovitz M.J."/>
            <person name="Rasko D.A."/>
            <person name="Kolsto A.B."/>
            <person name="Okstad O.A."/>
            <person name="Ravel J."/>
            <person name="Sutton G."/>
        </authorList>
    </citation>
    <scope>NUCLEOTIDE SEQUENCE [LARGE SCALE GENOMIC DNA]</scope>
    <source>
        <strain>AH187</strain>
    </source>
</reference>
<comment type="function">
    <text evidence="1">May play a role in DNA repair. It seems to be involved in an RecBC-independent recombinational process of DNA repair. It may act with RecF and RecO.</text>
</comment>
<comment type="similarity">
    <text evidence="1">Belongs to the RecR family.</text>
</comment>
<evidence type="ECO:0000255" key="1">
    <source>
        <dbReference type="HAMAP-Rule" id="MF_00017"/>
    </source>
</evidence>
<gene>
    <name evidence="1" type="primary">recR</name>
    <name type="ordered locus">BCAH187_A0028</name>
</gene>
<proteinExistence type="inferred from homology"/>
<keyword id="KW-0227">DNA damage</keyword>
<keyword id="KW-0233">DNA recombination</keyword>
<keyword id="KW-0234">DNA repair</keyword>
<keyword id="KW-0479">Metal-binding</keyword>
<keyword id="KW-0862">Zinc</keyword>
<keyword id="KW-0863">Zinc-finger</keyword>